<name>RL24_STRGG</name>
<protein>
    <recommendedName>
        <fullName evidence="1">Large ribosomal subunit protein uL24</fullName>
    </recommendedName>
    <alternativeName>
        <fullName evidence="2">50S ribosomal protein L24</fullName>
    </alternativeName>
</protein>
<sequence>MKIKKGDLVQVITGKDKGKQGKVIVAYPAQDRVLVEGVNRVKKHTKAGQTARGSQTGGIVTTEAPIHVSNVQLVVEKDGNKVVTRVGYRFDDEGNKIRVAKRTGEDI</sequence>
<keyword id="KW-0687">Ribonucleoprotein</keyword>
<keyword id="KW-0689">Ribosomal protein</keyword>
<keyword id="KW-0694">RNA-binding</keyword>
<keyword id="KW-0699">rRNA-binding</keyword>
<reference key="1">
    <citation type="journal article" date="2008" name="J. Bacteriol.">
        <title>Genome sequence of the streptomycin-producing microorganism Streptomyces griseus IFO 13350.</title>
        <authorList>
            <person name="Ohnishi Y."/>
            <person name="Ishikawa J."/>
            <person name="Hara H."/>
            <person name="Suzuki H."/>
            <person name="Ikenoya M."/>
            <person name="Ikeda H."/>
            <person name="Yamashita A."/>
            <person name="Hattori M."/>
            <person name="Horinouchi S."/>
        </authorList>
    </citation>
    <scope>NUCLEOTIDE SEQUENCE [LARGE SCALE GENOMIC DNA]</scope>
    <source>
        <strain>JCM 4626 / CBS 651.72 / NBRC 13350 / KCC S-0626 / ISP 5235</strain>
    </source>
</reference>
<dbReference type="EMBL" id="AP009493">
    <property type="protein sequence ID" value="BAG19652.1"/>
    <property type="molecule type" value="Genomic_DNA"/>
</dbReference>
<dbReference type="RefSeq" id="WP_003966949.1">
    <property type="nucleotide sequence ID" value="NC_010572.1"/>
</dbReference>
<dbReference type="SMR" id="B1W3Z6"/>
<dbReference type="GeneID" id="97760381"/>
<dbReference type="KEGG" id="sgr:SGR_2823"/>
<dbReference type="eggNOG" id="COG0198">
    <property type="taxonomic scope" value="Bacteria"/>
</dbReference>
<dbReference type="HOGENOM" id="CLU_093315_2_0_11"/>
<dbReference type="Proteomes" id="UP000001685">
    <property type="component" value="Chromosome"/>
</dbReference>
<dbReference type="GO" id="GO:1990904">
    <property type="term" value="C:ribonucleoprotein complex"/>
    <property type="evidence" value="ECO:0007669"/>
    <property type="project" value="UniProtKB-KW"/>
</dbReference>
<dbReference type="GO" id="GO:0005840">
    <property type="term" value="C:ribosome"/>
    <property type="evidence" value="ECO:0007669"/>
    <property type="project" value="UniProtKB-KW"/>
</dbReference>
<dbReference type="GO" id="GO:0019843">
    <property type="term" value="F:rRNA binding"/>
    <property type="evidence" value="ECO:0007669"/>
    <property type="project" value="UniProtKB-UniRule"/>
</dbReference>
<dbReference type="GO" id="GO:0003735">
    <property type="term" value="F:structural constituent of ribosome"/>
    <property type="evidence" value="ECO:0007669"/>
    <property type="project" value="InterPro"/>
</dbReference>
<dbReference type="GO" id="GO:0006412">
    <property type="term" value="P:translation"/>
    <property type="evidence" value="ECO:0007669"/>
    <property type="project" value="UniProtKB-UniRule"/>
</dbReference>
<dbReference type="CDD" id="cd06089">
    <property type="entry name" value="KOW_RPL26"/>
    <property type="match status" value="1"/>
</dbReference>
<dbReference type="FunFam" id="2.30.30.30:FF:000004">
    <property type="entry name" value="50S ribosomal protein L24"/>
    <property type="match status" value="1"/>
</dbReference>
<dbReference type="Gene3D" id="2.30.30.30">
    <property type="match status" value="1"/>
</dbReference>
<dbReference type="HAMAP" id="MF_01326_B">
    <property type="entry name" value="Ribosomal_uL24_B"/>
    <property type="match status" value="1"/>
</dbReference>
<dbReference type="InterPro" id="IPR005824">
    <property type="entry name" value="KOW"/>
</dbReference>
<dbReference type="InterPro" id="IPR014722">
    <property type="entry name" value="Rib_uL2_dom2"/>
</dbReference>
<dbReference type="InterPro" id="IPR003256">
    <property type="entry name" value="Ribosomal_uL24"/>
</dbReference>
<dbReference type="InterPro" id="IPR005825">
    <property type="entry name" value="Ribosomal_uL24_CS"/>
</dbReference>
<dbReference type="InterPro" id="IPR041988">
    <property type="entry name" value="Ribosomal_uL24_KOW"/>
</dbReference>
<dbReference type="InterPro" id="IPR008991">
    <property type="entry name" value="Translation_prot_SH3-like_sf"/>
</dbReference>
<dbReference type="NCBIfam" id="TIGR01079">
    <property type="entry name" value="rplX_bact"/>
    <property type="match status" value="1"/>
</dbReference>
<dbReference type="PANTHER" id="PTHR12903">
    <property type="entry name" value="MITOCHONDRIAL RIBOSOMAL PROTEIN L24"/>
    <property type="match status" value="1"/>
</dbReference>
<dbReference type="Pfam" id="PF00467">
    <property type="entry name" value="KOW"/>
    <property type="match status" value="1"/>
</dbReference>
<dbReference type="Pfam" id="PF17136">
    <property type="entry name" value="ribosomal_L24"/>
    <property type="match status" value="1"/>
</dbReference>
<dbReference type="SMART" id="SM00739">
    <property type="entry name" value="KOW"/>
    <property type="match status" value="1"/>
</dbReference>
<dbReference type="SUPFAM" id="SSF50104">
    <property type="entry name" value="Translation proteins SH3-like domain"/>
    <property type="match status" value="1"/>
</dbReference>
<dbReference type="PROSITE" id="PS01108">
    <property type="entry name" value="RIBOSOMAL_L24"/>
    <property type="match status" value="1"/>
</dbReference>
<proteinExistence type="inferred from homology"/>
<organism>
    <name type="scientific">Streptomyces griseus subsp. griseus (strain JCM 4626 / CBS 651.72 / NBRC 13350 / KCC S-0626 / ISP 5235)</name>
    <dbReference type="NCBI Taxonomy" id="455632"/>
    <lineage>
        <taxon>Bacteria</taxon>
        <taxon>Bacillati</taxon>
        <taxon>Actinomycetota</taxon>
        <taxon>Actinomycetes</taxon>
        <taxon>Kitasatosporales</taxon>
        <taxon>Streptomycetaceae</taxon>
        <taxon>Streptomyces</taxon>
    </lineage>
</organism>
<accession>B1W3Z6</accession>
<feature type="chain" id="PRO_1000142043" description="Large ribosomal subunit protein uL24">
    <location>
        <begin position="1"/>
        <end position="107"/>
    </location>
</feature>
<comment type="function">
    <text evidence="1">One of two assembly initiator proteins, it binds directly to the 5'-end of the 23S rRNA, where it nucleates assembly of the 50S subunit.</text>
</comment>
<comment type="function">
    <text evidence="1">One of the proteins that surrounds the polypeptide exit tunnel on the outside of the subunit.</text>
</comment>
<comment type="subunit">
    <text evidence="1">Part of the 50S ribosomal subunit.</text>
</comment>
<comment type="similarity">
    <text evidence="1">Belongs to the universal ribosomal protein uL24 family.</text>
</comment>
<gene>
    <name evidence="1" type="primary">rplX</name>
    <name type="ordered locus">SGR_2823</name>
</gene>
<evidence type="ECO:0000255" key="1">
    <source>
        <dbReference type="HAMAP-Rule" id="MF_01326"/>
    </source>
</evidence>
<evidence type="ECO:0000305" key="2"/>